<protein>
    <recommendedName>
        <fullName evidence="1">Ecotin</fullName>
    </recommendedName>
</protein>
<feature type="signal peptide" evidence="1">
    <location>
        <begin position="1"/>
        <end position="20"/>
    </location>
</feature>
<feature type="chain" id="PRO_1000132360" description="Ecotin">
    <location>
        <begin position="21"/>
        <end position="162"/>
    </location>
</feature>
<feature type="site" description="Reactive bond" evidence="1">
    <location>
        <begin position="104"/>
        <end position="105"/>
    </location>
</feature>
<feature type="disulfide bond" evidence="1">
    <location>
        <begin position="70"/>
        <end position="107"/>
    </location>
</feature>
<evidence type="ECO:0000255" key="1">
    <source>
        <dbReference type="HAMAP-Rule" id="MF_00706"/>
    </source>
</evidence>
<sequence length="162" mass="18165">MKTILPAVLFAAFATTSAWAAESVQPLEKIAPYPQAEKGMKRQVIQLTPQEDESTLKVELLIGQTLEVDCNLHRLGGKLESKTLEGWGYDYYVFDKVSSPVSTMMACPDGKKEKKFVTAYLGDAGMLRYNSKLPIVVYTPDNVDVKYRVWKAEEKIDNAVVR</sequence>
<reference key="1">
    <citation type="journal article" date="2009" name="PLoS Genet.">
        <title>Organised genome dynamics in the Escherichia coli species results in highly diverse adaptive paths.</title>
        <authorList>
            <person name="Touchon M."/>
            <person name="Hoede C."/>
            <person name="Tenaillon O."/>
            <person name="Barbe V."/>
            <person name="Baeriswyl S."/>
            <person name="Bidet P."/>
            <person name="Bingen E."/>
            <person name="Bonacorsi S."/>
            <person name="Bouchier C."/>
            <person name="Bouvet O."/>
            <person name="Calteau A."/>
            <person name="Chiapello H."/>
            <person name="Clermont O."/>
            <person name="Cruveiller S."/>
            <person name="Danchin A."/>
            <person name="Diard M."/>
            <person name="Dossat C."/>
            <person name="Karoui M.E."/>
            <person name="Frapy E."/>
            <person name="Garry L."/>
            <person name="Ghigo J.M."/>
            <person name="Gilles A.M."/>
            <person name="Johnson J."/>
            <person name="Le Bouguenec C."/>
            <person name="Lescat M."/>
            <person name="Mangenot S."/>
            <person name="Martinez-Jehanne V."/>
            <person name="Matic I."/>
            <person name="Nassif X."/>
            <person name="Oztas S."/>
            <person name="Petit M.A."/>
            <person name="Pichon C."/>
            <person name="Rouy Z."/>
            <person name="Ruf C.S."/>
            <person name="Schneider D."/>
            <person name="Tourret J."/>
            <person name="Vacherie B."/>
            <person name="Vallenet D."/>
            <person name="Medigue C."/>
            <person name="Rocha E.P.C."/>
            <person name="Denamur E."/>
        </authorList>
    </citation>
    <scope>NUCLEOTIDE SEQUENCE [LARGE SCALE GENOMIC DNA]</scope>
    <source>
        <strain>UMN026 / ExPEC</strain>
    </source>
</reference>
<comment type="function">
    <text evidence="1">General inhibitor of pancreatic serine proteases: inhibits chymotrypsin, trypsin, elastases, factor X, kallikrein as well as a variety of other proteases.</text>
</comment>
<comment type="subunit">
    <text evidence="1">Homodimer.</text>
</comment>
<comment type="subcellular location">
    <subcellularLocation>
        <location evidence="1">Periplasm</location>
    </subcellularLocation>
</comment>
<comment type="similarity">
    <text evidence="1">Belongs to the protease inhibitor I11 (ecotin) family.</text>
</comment>
<dbReference type="EMBL" id="CU928163">
    <property type="protein sequence ID" value="CAR13730.1"/>
    <property type="molecule type" value="Genomic_DNA"/>
</dbReference>
<dbReference type="RefSeq" id="YP_002413258.1">
    <property type="nucleotide sequence ID" value="NC_011751.1"/>
</dbReference>
<dbReference type="SMR" id="B7N5H1"/>
<dbReference type="STRING" id="585056.ECUMN_2545"/>
<dbReference type="MEROPS" id="I11.001"/>
<dbReference type="KEGG" id="eum:ECUMN_2545"/>
<dbReference type="PATRIC" id="fig|585056.7.peg.2727"/>
<dbReference type="HOGENOM" id="CLU_111565_0_0_6"/>
<dbReference type="Proteomes" id="UP000007097">
    <property type="component" value="Chromosome"/>
</dbReference>
<dbReference type="GO" id="GO:0042597">
    <property type="term" value="C:periplasmic space"/>
    <property type="evidence" value="ECO:0007669"/>
    <property type="project" value="UniProtKB-SubCell"/>
</dbReference>
<dbReference type="GO" id="GO:0004867">
    <property type="term" value="F:serine-type endopeptidase inhibitor activity"/>
    <property type="evidence" value="ECO:0007669"/>
    <property type="project" value="UniProtKB-UniRule"/>
</dbReference>
<dbReference type="CDD" id="cd00242">
    <property type="entry name" value="Ecotin"/>
    <property type="match status" value="1"/>
</dbReference>
<dbReference type="FunFam" id="2.60.40.550:FF:000001">
    <property type="entry name" value="Ecotin"/>
    <property type="match status" value="1"/>
</dbReference>
<dbReference type="FunFam" id="4.10.1230.10:FF:000001">
    <property type="entry name" value="Ecotin"/>
    <property type="match status" value="1"/>
</dbReference>
<dbReference type="Gene3D" id="2.60.40.550">
    <property type="entry name" value="Ecotin"/>
    <property type="match status" value="1"/>
</dbReference>
<dbReference type="Gene3D" id="4.10.1230.10">
    <property type="entry name" value="Ecotin, trypsin inhibitor"/>
    <property type="match status" value="1"/>
</dbReference>
<dbReference type="HAMAP" id="MF_00706">
    <property type="entry name" value="Ecotin"/>
    <property type="match status" value="1"/>
</dbReference>
<dbReference type="InterPro" id="IPR027438">
    <property type="entry name" value="Ecotin_C"/>
</dbReference>
<dbReference type="InterPro" id="IPR036198">
    <property type="entry name" value="Ecotin_sf"/>
</dbReference>
<dbReference type="InterPro" id="IPR005658">
    <property type="entry name" value="Prot_inh_ecotin"/>
</dbReference>
<dbReference type="InterPro" id="IPR023084">
    <property type="entry name" value="Prot_inh_ecotin_gammaproteobac"/>
</dbReference>
<dbReference type="NCBIfam" id="NF002987">
    <property type="entry name" value="PRK03719.1"/>
    <property type="match status" value="1"/>
</dbReference>
<dbReference type="PANTHER" id="PTHR35890">
    <property type="match status" value="1"/>
</dbReference>
<dbReference type="PANTHER" id="PTHR35890:SF3">
    <property type="entry name" value="ECOTIN"/>
    <property type="match status" value="1"/>
</dbReference>
<dbReference type="Pfam" id="PF03974">
    <property type="entry name" value="Ecotin"/>
    <property type="match status" value="1"/>
</dbReference>
<dbReference type="PIRSF" id="PIRSF006865">
    <property type="entry name" value="Prot_inh_ecotin"/>
    <property type="match status" value="1"/>
</dbReference>
<dbReference type="SUPFAM" id="SSF49772">
    <property type="entry name" value="Ecotin, trypsin inhibitor"/>
    <property type="match status" value="1"/>
</dbReference>
<name>ECOT_ECOLU</name>
<keyword id="KW-1015">Disulfide bond</keyword>
<keyword id="KW-0574">Periplasm</keyword>
<keyword id="KW-0646">Protease inhibitor</keyword>
<keyword id="KW-0722">Serine protease inhibitor</keyword>
<keyword id="KW-0732">Signal</keyword>
<gene>
    <name evidence="1" type="primary">eco</name>
    <name type="ordered locus">ECUMN_2545</name>
</gene>
<proteinExistence type="inferred from homology"/>
<organism>
    <name type="scientific">Escherichia coli O17:K52:H18 (strain UMN026 / ExPEC)</name>
    <dbReference type="NCBI Taxonomy" id="585056"/>
    <lineage>
        <taxon>Bacteria</taxon>
        <taxon>Pseudomonadati</taxon>
        <taxon>Pseudomonadota</taxon>
        <taxon>Gammaproteobacteria</taxon>
        <taxon>Enterobacterales</taxon>
        <taxon>Enterobacteriaceae</taxon>
        <taxon>Escherichia</taxon>
    </lineage>
</organism>
<accession>B7N5H1</accession>